<gene>
    <name evidence="1" type="primary">gap</name>
    <name type="ordered locus">MmarC5_1348</name>
</gene>
<name>G3P_METM5</name>
<dbReference type="EC" id="1.2.1.59" evidence="1"/>
<dbReference type="EMBL" id="CP000609">
    <property type="protein sequence ID" value="ABO35646.1"/>
    <property type="molecule type" value="Genomic_DNA"/>
</dbReference>
<dbReference type="RefSeq" id="WP_011869097.1">
    <property type="nucleotide sequence ID" value="NC_009135.1"/>
</dbReference>
<dbReference type="SMR" id="A4FZL2"/>
<dbReference type="STRING" id="402880.MmarC5_1348"/>
<dbReference type="GeneID" id="4928002"/>
<dbReference type="KEGG" id="mmq:MmarC5_1348"/>
<dbReference type="eggNOG" id="arCOG00493">
    <property type="taxonomic scope" value="Archaea"/>
</dbReference>
<dbReference type="HOGENOM" id="CLU_069533_0_0_2"/>
<dbReference type="OrthoDB" id="295712at2157"/>
<dbReference type="UniPathway" id="UPA00109">
    <property type="reaction ID" value="UER00184"/>
</dbReference>
<dbReference type="Proteomes" id="UP000000253">
    <property type="component" value="Chromosome"/>
</dbReference>
<dbReference type="GO" id="GO:0005737">
    <property type="term" value="C:cytoplasm"/>
    <property type="evidence" value="ECO:0007669"/>
    <property type="project" value="UniProtKB-SubCell"/>
</dbReference>
<dbReference type="GO" id="GO:0008839">
    <property type="term" value="F:4-hydroxy-tetrahydrodipicolinate reductase"/>
    <property type="evidence" value="ECO:0007669"/>
    <property type="project" value="InterPro"/>
</dbReference>
<dbReference type="GO" id="GO:0004365">
    <property type="term" value="F:glyceraldehyde-3-phosphate dehydrogenase (NAD+) (phosphorylating) activity"/>
    <property type="evidence" value="ECO:0007669"/>
    <property type="project" value="UniProtKB-UniRule"/>
</dbReference>
<dbReference type="GO" id="GO:0047100">
    <property type="term" value="F:glyceraldehyde-3-phosphate dehydrogenase (NADP+) (phosphorylating) activity"/>
    <property type="evidence" value="ECO:0007669"/>
    <property type="project" value="RHEA"/>
</dbReference>
<dbReference type="GO" id="GO:0051287">
    <property type="term" value="F:NAD binding"/>
    <property type="evidence" value="ECO:0007669"/>
    <property type="project" value="InterPro"/>
</dbReference>
<dbReference type="GO" id="GO:0050661">
    <property type="term" value="F:NADP binding"/>
    <property type="evidence" value="ECO:0007669"/>
    <property type="project" value="InterPro"/>
</dbReference>
<dbReference type="GO" id="GO:0006096">
    <property type="term" value="P:glycolytic process"/>
    <property type="evidence" value="ECO:0007669"/>
    <property type="project" value="UniProtKB-UniRule"/>
</dbReference>
<dbReference type="GO" id="GO:0009089">
    <property type="term" value="P:lysine biosynthetic process via diaminopimelate"/>
    <property type="evidence" value="ECO:0007669"/>
    <property type="project" value="InterPro"/>
</dbReference>
<dbReference type="CDD" id="cd18127">
    <property type="entry name" value="GAPDH_II_C"/>
    <property type="match status" value="1"/>
</dbReference>
<dbReference type="CDD" id="cd02278">
    <property type="entry name" value="GAPDH_II_N"/>
    <property type="match status" value="1"/>
</dbReference>
<dbReference type="Gene3D" id="3.30.360.10">
    <property type="entry name" value="Dihydrodipicolinate Reductase, domain 2"/>
    <property type="match status" value="1"/>
</dbReference>
<dbReference type="Gene3D" id="3.40.50.720">
    <property type="entry name" value="NAD(P)-binding Rossmann-like Domain"/>
    <property type="match status" value="1"/>
</dbReference>
<dbReference type="HAMAP" id="MF_00559">
    <property type="entry name" value="G3P_dehdrog_arch"/>
    <property type="match status" value="1"/>
</dbReference>
<dbReference type="InterPro" id="IPR000846">
    <property type="entry name" value="DapB_N"/>
</dbReference>
<dbReference type="InterPro" id="IPR020831">
    <property type="entry name" value="GlycerAld/Erythrose_P_DH"/>
</dbReference>
<dbReference type="InterPro" id="IPR020830">
    <property type="entry name" value="GlycerAld_3-P_DH_AS"/>
</dbReference>
<dbReference type="InterPro" id="IPR020829">
    <property type="entry name" value="GlycerAld_3-P_DH_cat"/>
</dbReference>
<dbReference type="InterPro" id="IPR020828">
    <property type="entry name" value="GlycerAld_3-P_DH_NAD(P)-bd"/>
</dbReference>
<dbReference type="InterPro" id="IPR006436">
    <property type="entry name" value="Glyceraldehyde-3-P_DH_2_arc"/>
</dbReference>
<dbReference type="InterPro" id="IPR036291">
    <property type="entry name" value="NAD(P)-bd_dom_sf"/>
</dbReference>
<dbReference type="NCBIfam" id="TIGR01546">
    <property type="entry name" value="GAPDH-II_archae"/>
    <property type="match status" value="1"/>
</dbReference>
<dbReference type="NCBIfam" id="NF003251">
    <property type="entry name" value="PRK04207.1"/>
    <property type="match status" value="1"/>
</dbReference>
<dbReference type="Pfam" id="PF01113">
    <property type="entry name" value="DapB_N"/>
    <property type="match status" value="1"/>
</dbReference>
<dbReference type="Pfam" id="PF02800">
    <property type="entry name" value="Gp_dh_C"/>
    <property type="match status" value="1"/>
</dbReference>
<dbReference type="PIRSF" id="PIRSF000149">
    <property type="entry name" value="GAP_DH"/>
    <property type="match status" value="1"/>
</dbReference>
<dbReference type="SMART" id="SM00846">
    <property type="entry name" value="Gp_dh_N"/>
    <property type="match status" value="1"/>
</dbReference>
<dbReference type="SUPFAM" id="SSF55347">
    <property type="entry name" value="Glyceraldehyde-3-phosphate dehydrogenase-like, C-terminal domain"/>
    <property type="match status" value="1"/>
</dbReference>
<dbReference type="SUPFAM" id="SSF51735">
    <property type="entry name" value="NAD(P)-binding Rossmann-fold domains"/>
    <property type="match status" value="1"/>
</dbReference>
<dbReference type="PROSITE" id="PS00071">
    <property type="entry name" value="GAPDH"/>
    <property type="match status" value="1"/>
</dbReference>
<protein>
    <recommendedName>
        <fullName evidence="1">Glyceraldehyde-3-phosphate dehydrogenase</fullName>
        <shortName evidence="1">GAPDH</shortName>
        <ecNumber evidence="1">1.2.1.59</ecNumber>
    </recommendedName>
    <alternativeName>
        <fullName evidence="1">NAD(P)-dependent glyceraldehyde-3-phosphate dehydrogenase</fullName>
    </alternativeName>
</protein>
<accession>A4FZL2</accession>
<evidence type="ECO:0000255" key="1">
    <source>
        <dbReference type="HAMAP-Rule" id="MF_00559"/>
    </source>
</evidence>
<proteinExistence type="inferred from homology"/>
<organism>
    <name type="scientific">Methanococcus maripaludis (strain C5 / ATCC BAA-1333)</name>
    <dbReference type="NCBI Taxonomy" id="402880"/>
    <lineage>
        <taxon>Archaea</taxon>
        <taxon>Methanobacteriati</taxon>
        <taxon>Methanobacteriota</taxon>
        <taxon>Methanomada group</taxon>
        <taxon>Methanococci</taxon>
        <taxon>Methanococcales</taxon>
        <taxon>Methanococcaceae</taxon>
        <taxon>Methanococcus</taxon>
    </lineage>
</organism>
<comment type="catalytic activity">
    <reaction evidence="1">
        <text>D-glyceraldehyde 3-phosphate + phosphate + NADP(+) = (2R)-3-phospho-glyceroyl phosphate + NADPH + H(+)</text>
        <dbReference type="Rhea" id="RHEA:10296"/>
        <dbReference type="ChEBI" id="CHEBI:15378"/>
        <dbReference type="ChEBI" id="CHEBI:43474"/>
        <dbReference type="ChEBI" id="CHEBI:57604"/>
        <dbReference type="ChEBI" id="CHEBI:57783"/>
        <dbReference type="ChEBI" id="CHEBI:58349"/>
        <dbReference type="ChEBI" id="CHEBI:59776"/>
        <dbReference type="EC" id="1.2.1.59"/>
    </reaction>
</comment>
<comment type="catalytic activity">
    <reaction evidence="1">
        <text>D-glyceraldehyde 3-phosphate + phosphate + NAD(+) = (2R)-3-phospho-glyceroyl phosphate + NADH + H(+)</text>
        <dbReference type="Rhea" id="RHEA:10300"/>
        <dbReference type="ChEBI" id="CHEBI:15378"/>
        <dbReference type="ChEBI" id="CHEBI:43474"/>
        <dbReference type="ChEBI" id="CHEBI:57540"/>
        <dbReference type="ChEBI" id="CHEBI:57604"/>
        <dbReference type="ChEBI" id="CHEBI:57945"/>
        <dbReference type="ChEBI" id="CHEBI:59776"/>
        <dbReference type="EC" id="1.2.1.59"/>
    </reaction>
</comment>
<comment type="pathway">
    <text evidence="1">Carbohydrate degradation; glycolysis; pyruvate from D-glyceraldehyde 3-phosphate: step 1/5.</text>
</comment>
<comment type="subunit">
    <text evidence="1">Homotetramer.</text>
</comment>
<comment type="subcellular location">
    <subcellularLocation>
        <location evidence="1">Cytoplasm</location>
    </subcellularLocation>
</comment>
<comment type="similarity">
    <text evidence="1">Belongs to the glyceraldehyde-3-phosphate dehydrogenase family.</text>
</comment>
<keyword id="KW-0963">Cytoplasm</keyword>
<keyword id="KW-0324">Glycolysis</keyword>
<keyword id="KW-0520">NAD</keyword>
<keyword id="KW-0521">NADP</keyword>
<keyword id="KW-0560">Oxidoreductase</keyword>
<feature type="chain" id="PRO_1000061117" description="Glyceraldehyde-3-phosphate dehydrogenase">
    <location>
        <begin position="1"/>
        <end position="340"/>
    </location>
</feature>
<feature type="active site" description="Nucleophile" evidence="1">
    <location>
        <position position="141"/>
    </location>
</feature>
<feature type="binding site" evidence="1">
    <location>
        <begin position="11"/>
        <end position="12"/>
    </location>
    <ligand>
        <name>NAD(+)</name>
        <dbReference type="ChEBI" id="CHEBI:57540"/>
    </ligand>
</feature>
<feature type="binding site" evidence="1">
    <location>
        <position position="111"/>
    </location>
    <ligand>
        <name>NAD(+)</name>
        <dbReference type="ChEBI" id="CHEBI:57540"/>
    </ligand>
</feature>
<feature type="binding site" evidence="1">
    <location>
        <begin position="140"/>
        <end position="142"/>
    </location>
    <ligand>
        <name>D-glyceraldehyde 3-phosphate</name>
        <dbReference type="ChEBI" id="CHEBI:59776"/>
    </ligand>
</feature>
<feature type="binding site" evidence="1">
    <location>
        <position position="169"/>
    </location>
    <ligand>
        <name>NAD(+)</name>
        <dbReference type="ChEBI" id="CHEBI:57540"/>
    </ligand>
</feature>
<feature type="binding site" evidence="1">
    <location>
        <begin position="195"/>
        <end position="196"/>
    </location>
    <ligand>
        <name>D-glyceraldehyde 3-phosphate</name>
        <dbReference type="ChEBI" id="CHEBI:59776"/>
    </ligand>
</feature>
<feature type="binding site" evidence="1">
    <location>
        <position position="303"/>
    </location>
    <ligand>
        <name>NAD(+)</name>
        <dbReference type="ChEBI" id="CHEBI:57540"/>
    </ligand>
</feature>
<reference key="1">
    <citation type="submission" date="2007-03" db="EMBL/GenBank/DDBJ databases">
        <title>Complete sequence of chromosome of Methanococcus maripaludis C5.</title>
        <authorList>
            <consortium name="US DOE Joint Genome Institute"/>
            <person name="Copeland A."/>
            <person name="Lucas S."/>
            <person name="Lapidus A."/>
            <person name="Barry K."/>
            <person name="Glavina del Rio T."/>
            <person name="Dalin E."/>
            <person name="Tice H."/>
            <person name="Pitluck S."/>
            <person name="Chertkov O."/>
            <person name="Brettin T."/>
            <person name="Bruce D."/>
            <person name="Han C."/>
            <person name="Detter J.C."/>
            <person name="Schmutz J."/>
            <person name="Larimer F."/>
            <person name="Land M."/>
            <person name="Hauser L."/>
            <person name="Kyrpides N."/>
            <person name="Mikhailova N."/>
            <person name="Sieprawska-Lupa M."/>
            <person name="Whitman W.B."/>
            <person name="Richardson P."/>
        </authorList>
    </citation>
    <scope>NUCLEOTIDE SEQUENCE [LARGE SCALE GENOMIC DNA]</scope>
    <source>
        <strain>C5 / ATCC BAA-1333</strain>
    </source>
</reference>
<sequence length="340" mass="37373">MVNVLINGYGSIGKRVADAVAKQDDMKVIGVTKTKPDFEARMAVEKGYKLFAAIPERKHLFEEAGIPVEGTLDDIIEDADIVVDGAPKKIGKANLENVYKKHGVKAILQGGEKAGDAQDSFNSLWSYDRCYGKDYIRLVSCNTTGLCRSMYAINSVADILKARIVLIRRAADPNDIKTGPVNAIVPNPVTVPSHHGPDVVSVIPQLDGKIMTSAVIVPTTLMHMHSIMVETSGTNRDEIIDALAKTPRILTLKASEGFDSTAKIIEYSRDLGRSRYDLNEIAVWEESVNVVDNEVYMMQAIHQESDVIPENVDCIRAMLEMESDNLKSIEKTNKAMGLIK</sequence>